<name>PPOX_SCHPO</name>
<dbReference type="EC" id="1.3.3.4"/>
<dbReference type="EMBL" id="CU329670">
    <property type="protein sequence ID" value="CAA92235.1"/>
    <property type="molecule type" value="Genomic_DNA"/>
</dbReference>
<dbReference type="PIR" id="T38088">
    <property type="entry name" value="T38088"/>
</dbReference>
<dbReference type="RefSeq" id="NP_592866.1">
    <property type="nucleotide sequence ID" value="NM_001018266.2"/>
</dbReference>
<dbReference type="SMR" id="Q10062"/>
<dbReference type="FunCoup" id="Q10062">
    <property type="interactions" value="250"/>
</dbReference>
<dbReference type="STRING" id="284812.Q10062"/>
<dbReference type="PaxDb" id="4896-SPAC1F5.07c.1"/>
<dbReference type="EnsemblFungi" id="SPAC1F5.07c.1">
    <property type="protein sequence ID" value="SPAC1F5.07c.1:pep"/>
    <property type="gene ID" value="SPAC1F5.07c"/>
</dbReference>
<dbReference type="GeneID" id="2541631"/>
<dbReference type="KEGG" id="spo:2541631"/>
<dbReference type="PomBase" id="SPAC1F5.07c">
    <property type="gene designation" value="hem14"/>
</dbReference>
<dbReference type="VEuPathDB" id="FungiDB:SPAC1F5.07c"/>
<dbReference type="eggNOG" id="KOG1276">
    <property type="taxonomic scope" value="Eukaryota"/>
</dbReference>
<dbReference type="HOGENOM" id="CLU_009629_1_0_1"/>
<dbReference type="InParanoid" id="Q10062"/>
<dbReference type="OMA" id="EHNQAVQ"/>
<dbReference type="PhylomeDB" id="Q10062"/>
<dbReference type="Reactome" id="R-SPO-189451">
    <property type="pathway name" value="Heme biosynthesis"/>
</dbReference>
<dbReference type="UniPathway" id="UPA00251">
    <property type="reaction ID" value="UER00324"/>
</dbReference>
<dbReference type="PRO" id="PR:Q10062"/>
<dbReference type="Proteomes" id="UP000002485">
    <property type="component" value="Chromosome I"/>
</dbReference>
<dbReference type="GO" id="GO:0005829">
    <property type="term" value="C:cytosol"/>
    <property type="evidence" value="ECO:0007005"/>
    <property type="project" value="PomBase"/>
</dbReference>
<dbReference type="GO" id="GO:0005739">
    <property type="term" value="C:mitochondrion"/>
    <property type="evidence" value="ECO:0000250"/>
    <property type="project" value="PomBase"/>
</dbReference>
<dbReference type="GO" id="GO:0005634">
    <property type="term" value="C:nucleus"/>
    <property type="evidence" value="ECO:0007005"/>
    <property type="project" value="PomBase"/>
</dbReference>
<dbReference type="GO" id="GO:0004729">
    <property type="term" value="F:oxygen-dependent protoporphyrinogen oxidase activity"/>
    <property type="evidence" value="ECO:0000318"/>
    <property type="project" value="GO_Central"/>
</dbReference>
<dbReference type="GO" id="GO:0006782">
    <property type="term" value="P:protoporphyrinogen IX biosynthetic process"/>
    <property type="evidence" value="ECO:0007669"/>
    <property type="project" value="UniProtKB-UniPathway"/>
</dbReference>
<dbReference type="FunFam" id="3.50.50.60:FF:000193">
    <property type="entry name" value="Protoporphyrinogen oxidase"/>
    <property type="match status" value="1"/>
</dbReference>
<dbReference type="Gene3D" id="3.50.50.60">
    <property type="entry name" value="FAD/NAD(P)-binding domain"/>
    <property type="match status" value="1"/>
</dbReference>
<dbReference type="InterPro" id="IPR002937">
    <property type="entry name" value="Amino_oxidase"/>
</dbReference>
<dbReference type="InterPro" id="IPR036188">
    <property type="entry name" value="FAD/NAD-bd_sf"/>
</dbReference>
<dbReference type="InterPro" id="IPR004572">
    <property type="entry name" value="Protoporphyrinogen_oxidase"/>
</dbReference>
<dbReference type="InterPro" id="IPR050464">
    <property type="entry name" value="Zeta_carotene_desat/Oxidored"/>
</dbReference>
<dbReference type="NCBIfam" id="TIGR00562">
    <property type="entry name" value="proto_IX_ox"/>
    <property type="match status" value="1"/>
</dbReference>
<dbReference type="PANTHER" id="PTHR42923">
    <property type="entry name" value="PROTOPORPHYRINOGEN OXIDASE"/>
    <property type="match status" value="1"/>
</dbReference>
<dbReference type="PANTHER" id="PTHR42923:SF3">
    <property type="entry name" value="PROTOPORPHYRINOGEN OXIDASE"/>
    <property type="match status" value="1"/>
</dbReference>
<dbReference type="Pfam" id="PF01593">
    <property type="entry name" value="Amino_oxidase"/>
    <property type="match status" value="1"/>
</dbReference>
<dbReference type="SUPFAM" id="SSF54373">
    <property type="entry name" value="FAD-linked reductases, C-terminal domain"/>
    <property type="match status" value="1"/>
</dbReference>
<dbReference type="SUPFAM" id="SSF51905">
    <property type="entry name" value="FAD/NAD(P)-binding domain"/>
    <property type="match status" value="1"/>
</dbReference>
<evidence type="ECO:0000250" key="1"/>
<evidence type="ECO:0000305" key="2"/>
<gene>
    <name type="primary">hem14</name>
    <name type="ORF">SPAC1F5.07c</name>
</gene>
<protein>
    <recommendedName>
        <fullName>Protoporphyrinogen oxidase</fullName>
        <shortName>PPO</shortName>
        <ecNumber>1.3.3.4</ecNumber>
    </recommendedName>
</protein>
<accession>Q10062</accession>
<sequence>MSIAICGGGIAGLSTAFYLARLIPKCTIDLYEKGPRLGGWLQSVKIPCADSPTGTVLFEQGPRTLRPAGVAGLANLDLISKLGIEDKLLRISSNSPSAKNRYIYYPDRLNEIPSSILGSIKSIMQPALRPMPLAMMLEPFRKSKRDSTDESVGSFMRRRFGKNVTDRVMSAMINGIYAGDLNDLSMHSSMFGFLAKIEKKYGNITLGLIRALLAREILSPAEKALKAALLAEPKTAELSNSMKSTSMFAFKEGIETITLSIADELKKMPNVKIHLNKPAKTLVPHKTQSLVDVNGQAYEYVVFANSSRNLENLISCPKMETPTSSVYVVNVYYKDPNVLPIRGFGLLIPSCTPNNPNHVLGIVFDSEQNNPENGSKVTVMMGGSAYTKNTSLIPTNPEEAVNNALKALQHTLKISSKPTLTNATLQQNCIPQYRVGHQDNLNSLKSWIEKNMGGRILLTGSWYNGVSIGDCIMNGHSTARKLASLMNSSS</sequence>
<comment type="function">
    <text>Catalyzes the 6-electron oxidation of protoporphyrinogen-IX to form protoporphyrin-IX.</text>
</comment>
<comment type="catalytic activity">
    <reaction>
        <text>protoporphyrinogen IX + 3 O2 = protoporphyrin IX + 3 H2O2</text>
        <dbReference type="Rhea" id="RHEA:25576"/>
        <dbReference type="ChEBI" id="CHEBI:15379"/>
        <dbReference type="ChEBI" id="CHEBI:16240"/>
        <dbReference type="ChEBI" id="CHEBI:57306"/>
        <dbReference type="ChEBI" id="CHEBI:57307"/>
        <dbReference type="EC" id="1.3.3.4"/>
    </reaction>
</comment>
<comment type="cofactor">
    <cofactor evidence="1">
        <name>FAD</name>
        <dbReference type="ChEBI" id="CHEBI:57692"/>
    </cofactor>
    <text evidence="1">Binds 1 FAD per subunit.</text>
</comment>
<comment type="pathway">
    <text>Porphyrin-containing compound metabolism; protoporphyrin-IX biosynthesis; protoporphyrin-IX from protoporphyrinogen-IX: step 1/1.</text>
</comment>
<comment type="subcellular location">
    <subcellularLocation>
        <location evidence="1">Mitochondrion</location>
    </subcellularLocation>
</comment>
<comment type="similarity">
    <text evidence="2">Belongs to the protoporphyrinogen/coproporphyrinogen oxidase family. Protoporphyrinogen oxidase subfamily.</text>
</comment>
<organism>
    <name type="scientific">Schizosaccharomyces pombe (strain 972 / ATCC 24843)</name>
    <name type="common">Fission yeast</name>
    <dbReference type="NCBI Taxonomy" id="284812"/>
    <lineage>
        <taxon>Eukaryota</taxon>
        <taxon>Fungi</taxon>
        <taxon>Dikarya</taxon>
        <taxon>Ascomycota</taxon>
        <taxon>Taphrinomycotina</taxon>
        <taxon>Schizosaccharomycetes</taxon>
        <taxon>Schizosaccharomycetales</taxon>
        <taxon>Schizosaccharomycetaceae</taxon>
        <taxon>Schizosaccharomyces</taxon>
    </lineage>
</organism>
<reference key="1">
    <citation type="journal article" date="2002" name="Nature">
        <title>The genome sequence of Schizosaccharomyces pombe.</title>
        <authorList>
            <person name="Wood V."/>
            <person name="Gwilliam R."/>
            <person name="Rajandream M.A."/>
            <person name="Lyne M.H."/>
            <person name="Lyne R."/>
            <person name="Stewart A."/>
            <person name="Sgouros J.G."/>
            <person name="Peat N."/>
            <person name="Hayles J."/>
            <person name="Baker S.G."/>
            <person name="Basham D."/>
            <person name="Bowman S."/>
            <person name="Brooks K."/>
            <person name="Brown D."/>
            <person name="Brown S."/>
            <person name="Chillingworth T."/>
            <person name="Churcher C.M."/>
            <person name="Collins M."/>
            <person name="Connor R."/>
            <person name="Cronin A."/>
            <person name="Davis P."/>
            <person name="Feltwell T."/>
            <person name="Fraser A."/>
            <person name="Gentles S."/>
            <person name="Goble A."/>
            <person name="Hamlin N."/>
            <person name="Harris D.E."/>
            <person name="Hidalgo J."/>
            <person name="Hodgson G."/>
            <person name="Holroyd S."/>
            <person name="Hornsby T."/>
            <person name="Howarth S."/>
            <person name="Huckle E.J."/>
            <person name="Hunt S."/>
            <person name="Jagels K."/>
            <person name="James K.D."/>
            <person name="Jones L."/>
            <person name="Jones M."/>
            <person name="Leather S."/>
            <person name="McDonald S."/>
            <person name="McLean J."/>
            <person name="Mooney P."/>
            <person name="Moule S."/>
            <person name="Mungall K.L."/>
            <person name="Murphy L.D."/>
            <person name="Niblett D."/>
            <person name="Odell C."/>
            <person name="Oliver K."/>
            <person name="O'Neil S."/>
            <person name="Pearson D."/>
            <person name="Quail M.A."/>
            <person name="Rabbinowitsch E."/>
            <person name="Rutherford K.M."/>
            <person name="Rutter S."/>
            <person name="Saunders D."/>
            <person name="Seeger K."/>
            <person name="Sharp S."/>
            <person name="Skelton J."/>
            <person name="Simmonds M.N."/>
            <person name="Squares R."/>
            <person name="Squares S."/>
            <person name="Stevens K."/>
            <person name="Taylor K."/>
            <person name="Taylor R.G."/>
            <person name="Tivey A."/>
            <person name="Walsh S.V."/>
            <person name="Warren T."/>
            <person name="Whitehead S."/>
            <person name="Woodward J.R."/>
            <person name="Volckaert G."/>
            <person name="Aert R."/>
            <person name="Robben J."/>
            <person name="Grymonprez B."/>
            <person name="Weltjens I."/>
            <person name="Vanstreels E."/>
            <person name="Rieger M."/>
            <person name="Schaefer M."/>
            <person name="Mueller-Auer S."/>
            <person name="Gabel C."/>
            <person name="Fuchs M."/>
            <person name="Duesterhoeft A."/>
            <person name="Fritzc C."/>
            <person name="Holzer E."/>
            <person name="Moestl D."/>
            <person name="Hilbert H."/>
            <person name="Borzym K."/>
            <person name="Langer I."/>
            <person name="Beck A."/>
            <person name="Lehrach H."/>
            <person name="Reinhardt R."/>
            <person name="Pohl T.M."/>
            <person name="Eger P."/>
            <person name="Zimmermann W."/>
            <person name="Wedler H."/>
            <person name="Wambutt R."/>
            <person name="Purnelle B."/>
            <person name="Goffeau A."/>
            <person name="Cadieu E."/>
            <person name="Dreano S."/>
            <person name="Gloux S."/>
            <person name="Lelaure V."/>
            <person name="Mottier S."/>
            <person name="Galibert F."/>
            <person name="Aves S.J."/>
            <person name="Xiang Z."/>
            <person name="Hunt C."/>
            <person name="Moore K."/>
            <person name="Hurst S.M."/>
            <person name="Lucas M."/>
            <person name="Rochet M."/>
            <person name="Gaillardin C."/>
            <person name="Tallada V.A."/>
            <person name="Garzon A."/>
            <person name="Thode G."/>
            <person name="Daga R.R."/>
            <person name="Cruzado L."/>
            <person name="Jimenez J."/>
            <person name="Sanchez M."/>
            <person name="del Rey F."/>
            <person name="Benito J."/>
            <person name="Dominguez A."/>
            <person name="Revuelta J.L."/>
            <person name="Moreno S."/>
            <person name="Armstrong J."/>
            <person name="Forsburg S.L."/>
            <person name="Cerutti L."/>
            <person name="Lowe T."/>
            <person name="McCombie W.R."/>
            <person name="Paulsen I."/>
            <person name="Potashkin J."/>
            <person name="Shpakovski G.V."/>
            <person name="Ussery D."/>
            <person name="Barrell B.G."/>
            <person name="Nurse P."/>
        </authorList>
    </citation>
    <scope>NUCLEOTIDE SEQUENCE [LARGE SCALE GENOMIC DNA]</scope>
    <source>
        <strain>972 / ATCC 24843</strain>
    </source>
</reference>
<proteinExistence type="inferred from homology"/>
<feature type="chain" id="PRO_0000116445" description="Protoporphyrinogen oxidase">
    <location>
        <begin position="1"/>
        <end position="490"/>
    </location>
</feature>
<feature type="binding site" evidence="1">
    <location>
        <begin position="7"/>
        <end position="12"/>
    </location>
    <ligand>
        <name>FAD</name>
        <dbReference type="ChEBI" id="CHEBI:57692"/>
    </ligand>
</feature>
<feature type="binding site" evidence="1">
    <location>
        <begin position="32"/>
        <end position="33"/>
    </location>
    <ligand>
        <name>FAD</name>
        <dbReference type="ChEBI" id="CHEBI:57692"/>
    </ligand>
</feature>
<feature type="binding site" evidence="1">
    <location>
        <position position="40"/>
    </location>
    <ligand>
        <name>FAD</name>
        <dbReference type="ChEBI" id="CHEBI:57692"/>
    </ligand>
</feature>
<feature type="binding site" evidence="1">
    <location>
        <begin position="61"/>
        <end position="64"/>
    </location>
    <ligand>
        <name>FAD</name>
        <dbReference type="ChEBI" id="CHEBI:57692"/>
    </ligand>
</feature>
<feature type="binding site" evidence="1">
    <location>
        <begin position="466"/>
        <end position="468"/>
    </location>
    <ligand>
        <name>FAD</name>
        <dbReference type="ChEBI" id="CHEBI:57692"/>
    </ligand>
</feature>
<keyword id="KW-0274">FAD</keyword>
<keyword id="KW-0285">Flavoprotein</keyword>
<keyword id="KW-0350">Heme biosynthesis</keyword>
<keyword id="KW-0496">Mitochondrion</keyword>
<keyword id="KW-0560">Oxidoreductase</keyword>
<keyword id="KW-0627">Porphyrin biosynthesis</keyword>
<keyword id="KW-1185">Reference proteome</keyword>